<dbReference type="EC" id="1.2.5.3" evidence="1"/>
<dbReference type="EMBL" id="U80806">
    <property type="protein sequence ID" value="AAD00362.1"/>
    <property type="molecule type" value="Genomic_DNA"/>
</dbReference>
<dbReference type="PDB" id="1FFU">
    <property type="method" value="X-ray"/>
    <property type="resolution" value="2.35 A"/>
    <property type="chains" value="A/D=1-163"/>
</dbReference>
<dbReference type="PDB" id="1FFV">
    <property type="method" value="X-ray"/>
    <property type="resolution" value="2.25 A"/>
    <property type="chains" value="A/D=1-163"/>
</dbReference>
<dbReference type="PDBsum" id="1FFU"/>
<dbReference type="PDBsum" id="1FFV"/>
<dbReference type="SMR" id="P19915"/>
<dbReference type="BRENDA" id="1.2.5.3">
    <property type="organism ID" value="2729"/>
</dbReference>
<dbReference type="EvolutionaryTrace" id="P19915"/>
<dbReference type="GO" id="GO:0051537">
    <property type="term" value="F:2 iron, 2 sulfur cluster binding"/>
    <property type="evidence" value="ECO:0007669"/>
    <property type="project" value="UniProtKB-KW"/>
</dbReference>
<dbReference type="GO" id="GO:0008805">
    <property type="term" value="F:carbon-monoxide oxygenase activity"/>
    <property type="evidence" value="ECO:0007669"/>
    <property type="project" value="UniProtKB-EC"/>
</dbReference>
<dbReference type="GO" id="GO:0046872">
    <property type="term" value="F:metal ion binding"/>
    <property type="evidence" value="ECO:0007669"/>
    <property type="project" value="UniProtKB-KW"/>
</dbReference>
<dbReference type="CDD" id="cd00207">
    <property type="entry name" value="fer2"/>
    <property type="match status" value="1"/>
</dbReference>
<dbReference type="FunFam" id="1.10.150.120:FF:000003">
    <property type="entry name" value="Carbon monoxide dehydrogenase, small subunit"/>
    <property type="match status" value="1"/>
</dbReference>
<dbReference type="FunFam" id="3.10.20.30:FF:000020">
    <property type="entry name" value="Xanthine dehydrogenase iron-sulfur subunit"/>
    <property type="match status" value="1"/>
</dbReference>
<dbReference type="Gene3D" id="3.10.20.30">
    <property type="match status" value="1"/>
</dbReference>
<dbReference type="Gene3D" id="1.10.150.120">
    <property type="entry name" value="[2Fe-2S]-binding domain"/>
    <property type="match status" value="1"/>
</dbReference>
<dbReference type="InterPro" id="IPR002888">
    <property type="entry name" value="2Fe-2S-bd"/>
</dbReference>
<dbReference type="InterPro" id="IPR036884">
    <property type="entry name" value="2Fe-2S-bd_dom_sf"/>
</dbReference>
<dbReference type="InterPro" id="IPR036010">
    <property type="entry name" value="2Fe-2S_ferredoxin-like_sf"/>
</dbReference>
<dbReference type="InterPro" id="IPR001041">
    <property type="entry name" value="2Fe-2S_ferredoxin-type"/>
</dbReference>
<dbReference type="InterPro" id="IPR012675">
    <property type="entry name" value="Beta-grasp_dom_sf"/>
</dbReference>
<dbReference type="InterPro" id="IPR051452">
    <property type="entry name" value="Diverse_Oxidoreductases"/>
</dbReference>
<dbReference type="PANTHER" id="PTHR44379">
    <property type="entry name" value="OXIDOREDUCTASE WITH IRON-SULFUR SUBUNIT"/>
    <property type="match status" value="1"/>
</dbReference>
<dbReference type="PANTHER" id="PTHR44379:SF5">
    <property type="entry name" value="OXIDOREDUCTASE WITH IRON-SULFUR SUBUNIT"/>
    <property type="match status" value="1"/>
</dbReference>
<dbReference type="Pfam" id="PF00111">
    <property type="entry name" value="Fer2"/>
    <property type="match status" value="1"/>
</dbReference>
<dbReference type="Pfam" id="PF01799">
    <property type="entry name" value="Fer2_2"/>
    <property type="match status" value="1"/>
</dbReference>
<dbReference type="SUPFAM" id="SSF54292">
    <property type="entry name" value="2Fe-2S ferredoxin-like"/>
    <property type="match status" value="1"/>
</dbReference>
<dbReference type="SUPFAM" id="SSF47741">
    <property type="entry name" value="CO dehydrogenase ISP C-domain like"/>
    <property type="match status" value="1"/>
</dbReference>
<dbReference type="PROSITE" id="PS51085">
    <property type="entry name" value="2FE2S_FER_2"/>
    <property type="match status" value="1"/>
</dbReference>
<sequence>MAKKIITVNVNGKAQEKAVEPRTLLIHFLREELNLTGAHIGCETSHCGACTVDIDGRSVKSCTHLAVQCDGSEVLTVEGLANKGVLHAVREGFYKEHGLQCGFCTPGMLMRAYRFLQENPNPTEAEIRMGMTGNLCRCTGYQNIVKAVQYAARKLQEPSTAAA</sequence>
<gene>
    <name type="primary">cutS</name>
</gene>
<proteinExistence type="evidence at protein level"/>
<organism>
    <name type="scientific">Hydrogenophaga pseudoflava</name>
    <name type="common">Pseudomonas carboxydoflava</name>
    <dbReference type="NCBI Taxonomy" id="47421"/>
    <lineage>
        <taxon>Bacteria</taxon>
        <taxon>Pseudomonadati</taxon>
        <taxon>Pseudomonadota</taxon>
        <taxon>Betaproteobacteria</taxon>
        <taxon>Burkholderiales</taxon>
        <taxon>Comamonadaceae</taxon>
        <taxon>Hydrogenophaga</taxon>
    </lineage>
</organism>
<evidence type="ECO:0000250" key="1">
    <source>
        <dbReference type="UniProtKB" id="P19921"/>
    </source>
</evidence>
<evidence type="ECO:0000255" key="2">
    <source>
        <dbReference type="PROSITE-ProRule" id="PRU00465"/>
    </source>
</evidence>
<evidence type="ECO:0000269" key="3">
    <source>
    </source>
</evidence>
<evidence type="ECO:0000305" key="4"/>
<evidence type="ECO:0007829" key="5">
    <source>
        <dbReference type="PDB" id="1FFV"/>
    </source>
</evidence>
<reference key="1">
    <citation type="journal article" date="1999" name="J. Bacteriol.">
        <title>Cloning and molecular characterization of the genes for carbon monoxide dehydrogenase and localization of molybdopterin, flavin adenine dinucleotide, and iron-sulfur centers in the enzyme of Hydrogenophaga pseudoflava.</title>
        <authorList>
            <person name="Kang B.S."/>
            <person name="Kim Y.M."/>
        </authorList>
    </citation>
    <scope>NUCLEOTIDE SEQUENCE [GENOMIC DNA]</scope>
    <scope>COFACTOR</scope>
    <scope>SUBUNIT</scope>
</reference>
<reference key="2">
    <citation type="journal article" date="1989" name="Arch. Microbiol.">
        <title>Homology and distribution of CO dehydrogenase structural genes in carboxydotrophic bacteria.</title>
        <authorList>
            <person name="Kraut M."/>
            <person name="Hugendieck I."/>
            <person name="Herwig S."/>
            <person name="Meyer O."/>
        </authorList>
    </citation>
    <scope>PROTEIN SEQUENCE OF 1-21</scope>
</reference>
<reference key="3">
    <citation type="journal article" date="2000" name="J. Mol. Biol.">
        <title>The effect of intracellular molybdenum in Hydrogenophaga pseudoflava on the crystallographic structure of the seleno-molybdo-iron-sulfur flavoenzyme carbon monoxide dehydrogenase.</title>
        <authorList>
            <person name="Haenzelmann P."/>
            <person name="Dobbek H."/>
            <person name="Gremer L."/>
            <person name="Huber R."/>
            <person name="Meyer O."/>
        </authorList>
    </citation>
    <scope>X-RAY CRYSTALLOGRAPHY (2.25 ANGSTROMS)</scope>
</reference>
<reference key="4">
    <citation type="journal article" date="2000" name="Biol. Chem.">
        <title>The role of Se, Mo and Fe in the structure and function of carbon monoxide dehydrogenase.</title>
        <authorList>
            <person name="Meyer O."/>
            <person name="Gremer L."/>
            <person name="Ferner R."/>
            <person name="Ferner M."/>
            <person name="Dobbek H."/>
            <person name="Gnida M."/>
            <person name="Meyer-Klaucke W."/>
            <person name="Huber R."/>
        </authorList>
    </citation>
    <scope>REVIEW</scope>
</reference>
<comment type="function">
    <text evidence="1">Catalyzes the oxidation of carbon monoxide to carbon dioxide.</text>
</comment>
<comment type="catalytic activity">
    <reaction evidence="1">
        <text>CO + a quinone + H2O = a quinol + CO2</text>
        <dbReference type="Rhea" id="RHEA:48880"/>
        <dbReference type="ChEBI" id="CHEBI:15377"/>
        <dbReference type="ChEBI" id="CHEBI:16526"/>
        <dbReference type="ChEBI" id="CHEBI:17245"/>
        <dbReference type="ChEBI" id="CHEBI:24646"/>
        <dbReference type="ChEBI" id="CHEBI:132124"/>
        <dbReference type="EC" id="1.2.5.3"/>
    </reaction>
</comment>
<comment type="cofactor">
    <cofactor evidence="3">
        <name>[2Fe-2S] cluster</name>
        <dbReference type="ChEBI" id="CHEBI:190135"/>
    </cofactor>
    <text evidence="3">Binds 2 [2Fe-2S] clusters.</text>
</comment>
<comment type="subunit">
    <text evidence="3">Dimer of heterotrimers. Each heterotrimer consists of a large, a medium and a small subunit.</text>
</comment>
<protein>
    <recommendedName>
        <fullName>Carbon monoxide dehydrogenase small chain</fullName>
        <shortName>CO dehydrogenase subunit S</shortName>
        <shortName>CO-DH S</shortName>
        <ecNumber evidence="1">1.2.5.3</ecNumber>
    </recommendedName>
</protein>
<accession>P19915</accession>
<accession>Q9ZAR6</accession>
<keyword id="KW-0001">2Fe-2S</keyword>
<keyword id="KW-0002">3D-structure</keyword>
<keyword id="KW-0903">Direct protein sequencing</keyword>
<keyword id="KW-0408">Iron</keyword>
<keyword id="KW-0411">Iron-sulfur</keyword>
<keyword id="KW-0479">Metal-binding</keyword>
<keyword id="KW-0560">Oxidoreductase</keyword>
<feature type="chain" id="PRO_0000079816" description="Carbon monoxide dehydrogenase small chain">
    <location>
        <begin position="1"/>
        <end position="163"/>
    </location>
</feature>
<feature type="domain" description="2Fe-2S ferredoxin-type" evidence="2">
    <location>
        <begin position="4"/>
        <end position="80"/>
    </location>
</feature>
<feature type="binding site">
    <location>
        <position position="42"/>
    </location>
    <ligand>
        <name>[2Fe-2S] cluster</name>
        <dbReference type="ChEBI" id="CHEBI:190135"/>
        <label>1</label>
    </ligand>
</feature>
<feature type="binding site">
    <location>
        <position position="47"/>
    </location>
    <ligand>
        <name>[2Fe-2S] cluster</name>
        <dbReference type="ChEBI" id="CHEBI:190135"/>
        <label>1</label>
    </ligand>
</feature>
<feature type="binding site">
    <location>
        <position position="50"/>
    </location>
    <ligand>
        <name>[2Fe-2S] cluster</name>
        <dbReference type="ChEBI" id="CHEBI:190135"/>
        <label>1</label>
    </ligand>
</feature>
<feature type="binding site">
    <location>
        <position position="62"/>
    </location>
    <ligand>
        <name>[2Fe-2S] cluster</name>
        <dbReference type="ChEBI" id="CHEBI:190135"/>
        <label>1</label>
    </ligand>
</feature>
<feature type="binding site">
    <location>
        <position position="101"/>
    </location>
    <ligand>
        <name>[2Fe-2S] cluster</name>
        <dbReference type="ChEBI" id="CHEBI:190135"/>
        <label>2</label>
    </ligand>
</feature>
<feature type="binding site">
    <location>
        <position position="104"/>
    </location>
    <ligand>
        <name>[2Fe-2S] cluster</name>
        <dbReference type="ChEBI" id="CHEBI:190135"/>
        <label>2</label>
    </ligand>
</feature>
<feature type="binding site">
    <location>
        <position position="136"/>
    </location>
    <ligand>
        <name>[2Fe-2S] cluster</name>
        <dbReference type="ChEBI" id="CHEBI:190135"/>
        <label>2</label>
    </ligand>
</feature>
<feature type="binding site">
    <location>
        <position position="138"/>
    </location>
    <ligand>
        <name>[2Fe-2S] cluster</name>
        <dbReference type="ChEBI" id="CHEBI:190135"/>
        <label>2</label>
    </ligand>
</feature>
<feature type="sequence conflict" description="In Ref. 2; AA sequence." evidence="4" ref="2">
    <location>
        <position position="11"/>
    </location>
</feature>
<feature type="strand" evidence="5">
    <location>
        <begin position="4"/>
        <end position="10"/>
    </location>
</feature>
<feature type="strand" evidence="5">
    <location>
        <begin position="13"/>
        <end position="19"/>
    </location>
</feature>
<feature type="helix" evidence="5">
    <location>
        <begin position="25"/>
        <end position="31"/>
    </location>
</feature>
<feature type="strand" evidence="5">
    <location>
        <begin position="43"/>
        <end position="45"/>
    </location>
</feature>
<feature type="strand" evidence="5">
    <location>
        <begin position="51"/>
        <end position="54"/>
    </location>
</feature>
<feature type="strand" evidence="5">
    <location>
        <begin position="57"/>
        <end position="60"/>
    </location>
</feature>
<feature type="helix" evidence="5">
    <location>
        <begin position="61"/>
        <end position="63"/>
    </location>
</feature>
<feature type="helix" evidence="5">
    <location>
        <begin position="66"/>
        <end position="69"/>
    </location>
</feature>
<feature type="strand" evidence="5">
    <location>
        <begin position="73"/>
        <end position="75"/>
    </location>
</feature>
<feature type="helix" evidence="5">
    <location>
        <begin position="77"/>
        <end position="79"/>
    </location>
</feature>
<feature type="strand" evidence="5">
    <location>
        <begin position="80"/>
        <end position="82"/>
    </location>
</feature>
<feature type="helix" evidence="5">
    <location>
        <begin position="88"/>
        <end position="95"/>
    </location>
</feature>
<feature type="helix" evidence="5">
    <location>
        <begin position="105"/>
        <end position="118"/>
    </location>
</feature>
<feature type="helix" evidence="5">
    <location>
        <begin position="124"/>
        <end position="130"/>
    </location>
</feature>
<feature type="turn" evidence="5">
    <location>
        <begin position="131"/>
        <end position="133"/>
    </location>
</feature>
<feature type="strand" evidence="5">
    <location>
        <begin position="137"/>
        <end position="139"/>
    </location>
</feature>
<feature type="helix" evidence="5">
    <location>
        <begin position="142"/>
        <end position="155"/>
    </location>
</feature>
<name>DCMS_HYDPS</name>